<dbReference type="EMBL" id="AF012925">
    <property type="protein sequence ID" value="AAB71353.1"/>
    <property type="molecule type" value="mRNA"/>
</dbReference>
<dbReference type="RefSeq" id="NP_001081704.1">
    <property type="nucleotide sequence ID" value="NM_001088235.1"/>
</dbReference>
<dbReference type="SMR" id="O42173"/>
<dbReference type="GeneID" id="398007"/>
<dbReference type="KEGG" id="xla:398007"/>
<dbReference type="AGR" id="Xenbase:XB-GENE-920512"/>
<dbReference type="CTD" id="398007"/>
<dbReference type="Xenbase" id="XB-GENE-920512">
    <property type="gene designation" value="ventx1.L"/>
</dbReference>
<dbReference type="OrthoDB" id="6159439at2759"/>
<dbReference type="Proteomes" id="UP000186698">
    <property type="component" value="Chromosome 7L"/>
</dbReference>
<dbReference type="Bgee" id="398007">
    <property type="expression patterns" value="Expressed in gastrula and 4 other cell types or tissues"/>
</dbReference>
<dbReference type="GO" id="GO:0005634">
    <property type="term" value="C:nucleus"/>
    <property type="evidence" value="ECO:0000318"/>
    <property type="project" value="GO_Central"/>
</dbReference>
<dbReference type="GO" id="GO:0000981">
    <property type="term" value="F:DNA-binding transcription factor activity, RNA polymerase II-specific"/>
    <property type="evidence" value="ECO:0000318"/>
    <property type="project" value="GO_Central"/>
</dbReference>
<dbReference type="GO" id="GO:0000978">
    <property type="term" value="F:RNA polymerase II cis-regulatory region sequence-specific DNA binding"/>
    <property type="evidence" value="ECO:0000318"/>
    <property type="project" value="GO_Central"/>
</dbReference>
<dbReference type="GO" id="GO:0043565">
    <property type="term" value="F:sequence-specific DNA binding"/>
    <property type="evidence" value="ECO:0000314"/>
    <property type="project" value="UniProtKB"/>
</dbReference>
<dbReference type="GO" id="GO:0030509">
    <property type="term" value="P:BMP signaling pathway"/>
    <property type="evidence" value="ECO:0000315"/>
    <property type="project" value="UniProtKB"/>
</dbReference>
<dbReference type="GO" id="GO:0030154">
    <property type="term" value="P:cell differentiation"/>
    <property type="evidence" value="ECO:0000318"/>
    <property type="project" value="GO_Central"/>
</dbReference>
<dbReference type="GO" id="GO:0048264">
    <property type="term" value="P:determination of ventral identity"/>
    <property type="evidence" value="ECO:0000315"/>
    <property type="project" value="UniProtKB"/>
</dbReference>
<dbReference type="GO" id="GO:0001707">
    <property type="term" value="P:mesoderm formation"/>
    <property type="evidence" value="ECO:0000315"/>
    <property type="project" value="UniProtKB"/>
</dbReference>
<dbReference type="GO" id="GO:0045892">
    <property type="term" value="P:negative regulation of DNA-templated transcription"/>
    <property type="evidence" value="ECO:0000315"/>
    <property type="project" value="UniProtKB"/>
</dbReference>
<dbReference type="GO" id="GO:0045647">
    <property type="term" value="P:negative regulation of erythrocyte differentiation"/>
    <property type="evidence" value="ECO:0000315"/>
    <property type="project" value="UniProtKB"/>
</dbReference>
<dbReference type="GO" id="GO:0050768">
    <property type="term" value="P:negative regulation of neurogenesis"/>
    <property type="evidence" value="ECO:0000315"/>
    <property type="project" value="UniProtKB"/>
</dbReference>
<dbReference type="GO" id="GO:0000122">
    <property type="term" value="P:negative regulation of transcription by RNA polymerase II"/>
    <property type="evidence" value="ECO:0000315"/>
    <property type="project" value="UniProtKB"/>
</dbReference>
<dbReference type="GO" id="GO:0045606">
    <property type="term" value="P:positive regulation of epidermal cell differentiation"/>
    <property type="evidence" value="ECO:0000315"/>
    <property type="project" value="UniProtKB"/>
</dbReference>
<dbReference type="GO" id="GO:0006357">
    <property type="term" value="P:regulation of transcription by RNA polymerase II"/>
    <property type="evidence" value="ECO:0000318"/>
    <property type="project" value="GO_Central"/>
</dbReference>
<dbReference type="CDD" id="cd00086">
    <property type="entry name" value="homeodomain"/>
    <property type="match status" value="1"/>
</dbReference>
<dbReference type="FunFam" id="1.10.10.60:FF:000451">
    <property type="entry name" value="Homeobox protein vent1"/>
    <property type="match status" value="1"/>
</dbReference>
<dbReference type="Gene3D" id="1.10.10.60">
    <property type="entry name" value="Homeodomain-like"/>
    <property type="match status" value="1"/>
</dbReference>
<dbReference type="InterPro" id="IPR001356">
    <property type="entry name" value="HD"/>
</dbReference>
<dbReference type="InterPro" id="IPR020479">
    <property type="entry name" value="HD_metazoa"/>
</dbReference>
<dbReference type="InterPro" id="IPR017970">
    <property type="entry name" value="Homeobox_CS"/>
</dbReference>
<dbReference type="InterPro" id="IPR050394">
    <property type="entry name" value="Homeobox_NK-like"/>
</dbReference>
<dbReference type="InterPro" id="IPR009057">
    <property type="entry name" value="Homeodomain-like_sf"/>
</dbReference>
<dbReference type="PANTHER" id="PTHR24340">
    <property type="entry name" value="HOMEOBOX PROTEIN NKX"/>
    <property type="match status" value="1"/>
</dbReference>
<dbReference type="PANTHER" id="PTHR24340:SF112">
    <property type="entry name" value="VENT HOMEOBOX"/>
    <property type="match status" value="1"/>
</dbReference>
<dbReference type="Pfam" id="PF00046">
    <property type="entry name" value="Homeodomain"/>
    <property type="match status" value="1"/>
</dbReference>
<dbReference type="PRINTS" id="PR00024">
    <property type="entry name" value="HOMEOBOX"/>
</dbReference>
<dbReference type="SMART" id="SM00389">
    <property type="entry name" value="HOX"/>
    <property type="match status" value="1"/>
</dbReference>
<dbReference type="SUPFAM" id="SSF46689">
    <property type="entry name" value="Homeodomain-like"/>
    <property type="match status" value="1"/>
</dbReference>
<dbReference type="PROSITE" id="PS00027">
    <property type="entry name" value="HOMEOBOX_1"/>
    <property type="match status" value="1"/>
</dbReference>
<dbReference type="PROSITE" id="PS50071">
    <property type="entry name" value="HOMEOBOX_2"/>
    <property type="match status" value="1"/>
</dbReference>
<gene>
    <name evidence="10" type="primary">pv.1</name>
</gene>
<protein>
    <recommendedName>
        <fullName>Homeobox protein pv.1</fullName>
    </recommendedName>
    <alternativeName>
        <fullName>Posterior-ventral 1 transcription factor</fullName>
    </alternativeName>
</protein>
<comment type="function">
    <text evidence="3 4 5 6 7 8">Transcriptional repressor. Acts in a ventral signaling pathway downstream of bmp4, which suppresses dorsal mesoderm formation and leads to both ventral mesoderm and ventral ectoderm formation. Acts in the ectoderm to simultaneously specify epidermal lineages and restrict neuralization. Represses transcription of dorsal-specific genes. Binds to DNA, with preference for the target sequences 5'-TAATGC-3' and 5'-TAATTG-3'. Acts in a pathway downstream of bmp4 and fgf to negatively regulate erythroid specification.</text>
</comment>
<comment type="subcellular location">
    <subcellularLocation>
        <location evidence="9">Nucleus</location>
    </subcellularLocation>
</comment>
<comment type="tissue specificity">
    <text evidence="7 8">Expressed in the ventral marginal zone of blastulae. At early gastrulation, expression begins to spread to the animal pole (ectoderm), and at stage 11.5 is expressed in a gradient across the animal cap, with levels highest in the ventral region. At the end of gastrulation, predominantly localized to the ventral and lateral regions of the closing slit blastopore. Also expressed at a low level in ventral endoderm.</text>
</comment>
<comment type="developmental stage">
    <text evidence="7">Expression begins in the late blastula, peaks at stage 11 (early gastrula) and decreases thereafter.</text>
</comment>
<comment type="induction">
    <text evidence="3 7 8">By bmp4 and its downstream effector smad1. Fgf enhances bmp4-induced expression.</text>
</comment>
<comment type="domain">
    <text evidence="6">The repressor activity is mostly localized to the C-terminal region.</text>
</comment>
<accession>O42173</accession>
<proteinExistence type="evidence at protein level"/>
<organism>
    <name type="scientific">Xenopus laevis</name>
    <name type="common">African clawed frog</name>
    <dbReference type="NCBI Taxonomy" id="8355"/>
    <lineage>
        <taxon>Eukaryota</taxon>
        <taxon>Metazoa</taxon>
        <taxon>Chordata</taxon>
        <taxon>Craniata</taxon>
        <taxon>Vertebrata</taxon>
        <taxon>Euteleostomi</taxon>
        <taxon>Amphibia</taxon>
        <taxon>Batrachia</taxon>
        <taxon>Anura</taxon>
        <taxon>Pipoidea</taxon>
        <taxon>Pipidae</taxon>
        <taxon>Xenopodinae</taxon>
        <taxon>Xenopus</taxon>
        <taxon>Xenopus</taxon>
    </lineage>
</organism>
<evidence type="ECO:0000255" key="1">
    <source>
        <dbReference type="PROSITE-ProRule" id="PRU00108"/>
    </source>
</evidence>
<evidence type="ECO:0000256" key="2">
    <source>
        <dbReference type="SAM" id="MobiDB-lite"/>
    </source>
</evidence>
<evidence type="ECO:0000269" key="3">
    <source>
    </source>
</evidence>
<evidence type="ECO:0000269" key="4">
    <source>
    </source>
</evidence>
<evidence type="ECO:0000269" key="5">
    <source>
    </source>
</evidence>
<evidence type="ECO:0000269" key="6">
    <source>
    </source>
</evidence>
<evidence type="ECO:0000269" key="7">
    <source>
    </source>
</evidence>
<evidence type="ECO:0000269" key="8">
    <source>
    </source>
</evidence>
<evidence type="ECO:0000305" key="9"/>
<evidence type="ECO:0000312" key="10">
    <source>
        <dbReference type="EMBL" id="AAB71353.1"/>
    </source>
</evidence>
<feature type="chain" id="PRO_0000286588" description="Homeobox protein pv.1">
    <location>
        <begin position="1"/>
        <end position="282"/>
    </location>
</feature>
<feature type="DNA-binding region" description="Homeobox" evidence="1">
    <location>
        <begin position="129"/>
        <end position="188"/>
    </location>
</feature>
<feature type="region of interest" description="Disordered" evidence="2">
    <location>
        <begin position="17"/>
        <end position="128"/>
    </location>
</feature>
<feature type="compositionally biased region" description="Basic and acidic residues" evidence="2">
    <location>
        <begin position="17"/>
        <end position="26"/>
    </location>
</feature>
<feature type="compositionally biased region" description="Basic and acidic residues" evidence="2">
    <location>
        <begin position="44"/>
        <end position="59"/>
    </location>
</feature>
<feature type="compositionally biased region" description="Polar residues" evidence="2">
    <location>
        <begin position="86"/>
        <end position="96"/>
    </location>
</feature>
<feature type="compositionally biased region" description="Polar residues" evidence="2">
    <location>
        <begin position="103"/>
        <end position="114"/>
    </location>
</feature>
<feature type="compositionally biased region" description="Basic and acidic residues" evidence="2">
    <location>
        <begin position="116"/>
        <end position="128"/>
    </location>
</feature>
<reference evidence="9 10" key="1">
    <citation type="journal article" date="1996" name="Proc. Natl. Acad. Sci. U.S.A.">
        <title>A novel homeobox gene PV.1 mediates induction of ventral mesoderm in Xenopus embryos.</title>
        <authorList>
            <person name="Ault K.T."/>
            <person name="Dirksen M.-L."/>
            <person name="Jamrich M."/>
        </authorList>
    </citation>
    <scope>NUCLEOTIDE SEQUENCE [MRNA]</scope>
    <scope>FUNCTION</scope>
    <scope>TISSUE SPECIFICITY</scope>
    <scope>DEVELOPMENTAL STAGE</scope>
    <scope>INDUCTION</scope>
    <source>
        <tissue evidence="7">Gastrula</tissue>
    </source>
</reference>
<reference evidence="9 10" key="2">
    <citation type="journal article" date="1997" name="Dev. Biol.">
        <title>The homeobox gene PV.1 mediates specification of the prospective neural ectoderm in Xenopus embryos.</title>
        <authorList>
            <person name="Ault K.T."/>
            <person name="Xu R.-H."/>
            <person name="Kung H.-F."/>
            <person name="Jamrich M."/>
        </authorList>
    </citation>
    <scope>NUCLEOTIDE SEQUENCE [MRNA]</scope>
    <scope>FUNCTION</scope>
    <scope>TISSUE SPECIFICITY</scope>
    <scope>INDUCTION</scope>
</reference>
<reference evidence="9" key="3">
    <citation type="journal article" date="1999" name="Dev. Biol.">
        <title>Opposite effects of FGF and BMP-4 on embryonic blood formation: roles of PV.1 and GATA-2.</title>
        <authorList>
            <person name="Xu R.-H."/>
            <person name="Ault K.T."/>
            <person name="Kim J."/>
            <person name="Park M.-J."/>
            <person name="Hwang Y.-S."/>
            <person name="Peng Y."/>
            <person name="Sredni D."/>
            <person name="Kung H.-F."/>
        </authorList>
    </citation>
    <scope>FUNCTION</scope>
    <scope>INDUCTION</scope>
</reference>
<reference evidence="9" key="4">
    <citation type="journal article" date="2000" name="Dev. Biol.">
        <title>Xlim-1 and LIM domain binding protein 1 cooperate with various transcription factors in the regulation of the goosecoid promoter.</title>
        <authorList>
            <person name="Mochizuki T."/>
            <person name="Karavanov A.A."/>
            <person name="Curtiss P.E."/>
            <person name="Ault K.T."/>
            <person name="Sugimoto N."/>
            <person name="Watabe T."/>
            <person name="Shiokawa K."/>
            <person name="Jamrich M."/>
            <person name="Cho K.W.Y."/>
            <person name="Dawid I.B."/>
            <person name="Taira M."/>
        </authorList>
    </citation>
    <scope>DNA-BINDING</scope>
</reference>
<reference evidence="9" key="5">
    <citation type="journal article" date="2002" name="Biochem. Biophys. Res. Commun.">
        <title>Antimorphic PV.1 causes secondary axis by inducing ectopic organizer.</title>
        <authorList>
            <person name="Hwang Y.-S."/>
            <person name="Seo J.-J."/>
            <person name="Cha S.-W."/>
            <person name="Lee H.-S."/>
            <person name="Lee S.-Y."/>
            <person name="Roh D.-H."/>
            <person name="Kung H.-F."/>
            <person name="Kim J."/>
            <person name="Park M.-J."/>
        </authorList>
    </citation>
    <scope>FUNCTION</scope>
</reference>
<reference evidence="9" key="6">
    <citation type="journal article" date="2003" name="Biochem. Biophys. Res. Commun.">
        <title>Active repression of organizer genes by C-terminal domain of PV.1.</title>
        <authorList>
            <person name="Hwang Y.-S."/>
            <person name="Lee H.-S."/>
            <person name="Roh D.-H."/>
            <person name="Cha S.-W."/>
            <person name="Lee S.-Y."/>
            <person name="Seo J.-J."/>
            <person name="Kim J."/>
            <person name="Park M.-J."/>
        </authorList>
    </citation>
    <scope>FUNCTION</scope>
    <scope>DOMAIN</scope>
</reference>
<name>PV1_XENLA</name>
<sequence>MVQQGFSIDLILARSREEAADGKDSMSSRPHIPCAPQPLPPNKYAKEMPRRKDGQDVQEHSSWSLGEQGKKLQYSSPSSAALHRSWGSSDDFSSVGSEDDSTEGSPSPMRNSQETETDHRGESPKSDLQRHLRTAFTPQQISKLEQAFNKQRYLGASERKKLATSLRLSEIQVKTWFQNRRMKLKRQIQDQQHNMVPPPVCYPQTFPYYPGVLPVPLNSGSFYQPPAHPFQAPQNSYIPDPRFIPQPLPHHIRMSVALQQQYPPLGLPPGRYFTGLASKNDG</sequence>
<keyword id="KW-0217">Developmental protein</keyword>
<keyword id="KW-0238">DNA-binding</keyword>
<keyword id="KW-0371">Homeobox</keyword>
<keyword id="KW-0539">Nucleus</keyword>
<keyword id="KW-1185">Reference proteome</keyword>